<name>MOAC_YERPN</name>
<dbReference type="EC" id="4.6.1.17" evidence="1"/>
<dbReference type="EMBL" id="CP000305">
    <property type="protein sequence ID" value="ABG19168.1"/>
    <property type="molecule type" value="Genomic_DNA"/>
</dbReference>
<dbReference type="EMBL" id="ACNQ01000017">
    <property type="protein sequence ID" value="EEO75311.1"/>
    <property type="molecule type" value="Genomic_DNA"/>
</dbReference>
<dbReference type="RefSeq" id="WP_002210772.1">
    <property type="nucleotide sequence ID" value="NZ_ACNQ01000017.1"/>
</dbReference>
<dbReference type="SMR" id="Q1CFR2"/>
<dbReference type="GeneID" id="57977299"/>
<dbReference type="KEGG" id="ypn:YPN_2841"/>
<dbReference type="HOGENOM" id="CLU_074693_1_1_6"/>
<dbReference type="UniPathway" id="UPA00344"/>
<dbReference type="Proteomes" id="UP000008936">
    <property type="component" value="Chromosome"/>
</dbReference>
<dbReference type="GO" id="GO:0061799">
    <property type="term" value="F:cyclic pyranopterin monophosphate synthase activity"/>
    <property type="evidence" value="ECO:0007669"/>
    <property type="project" value="UniProtKB-UniRule"/>
</dbReference>
<dbReference type="GO" id="GO:0006777">
    <property type="term" value="P:Mo-molybdopterin cofactor biosynthetic process"/>
    <property type="evidence" value="ECO:0007669"/>
    <property type="project" value="UniProtKB-UniRule"/>
</dbReference>
<dbReference type="CDD" id="cd01420">
    <property type="entry name" value="MoaC_PE"/>
    <property type="match status" value="1"/>
</dbReference>
<dbReference type="FunFam" id="3.30.70.640:FF:000001">
    <property type="entry name" value="Cyclic pyranopterin monophosphate synthase"/>
    <property type="match status" value="1"/>
</dbReference>
<dbReference type="Gene3D" id="3.30.70.640">
    <property type="entry name" value="Molybdopterin cofactor biosynthesis C (MoaC) domain"/>
    <property type="match status" value="1"/>
</dbReference>
<dbReference type="HAMAP" id="MF_01224_B">
    <property type="entry name" value="MoaC_B"/>
    <property type="match status" value="1"/>
</dbReference>
<dbReference type="InterPro" id="IPR023045">
    <property type="entry name" value="MoaC"/>
</dbReference>
<dbReference type="InterPro" id="IPR047594">
    <property type="entry name" value="MoaC_bact/euk"/>
</dbReference>
<dbReference type="InterPro" id="IPR036522">
    <property type="entry name" value="MoaC_sf"/>
</dbReference>
<dbReference type="InterPro" id="IPR050105">
    <property type="entry name" value="MoCo_biosynth_MoaA/MoaC"/>
</dbReference>
<dbReference type="InterPro" id="IPR002820">
    <property type="entry name" value="Mopterin_CF_biosynth-C_dom"/>
</dbReference>
<dbReference type="NCBIfam" id="TIGR00581">
    <property type="entry name" value="moaC"/>
    <property type="match status" value="1"/>
</dbReference>
<dbReference type="NCBIfam" id="NF006870">
    <property type="entry name" value="PRK09364.1"/>
    <property type="match status" value="1"/>
</dbReference>
<dbReference type="PANTHER" id="PTHR22960">
    <property type="entry name" value="MOLYBDOPTERIN COFACTOR SYNTHESIS PROTEIN A"/>
    <property type="match status" value="1"/>
</dbReference>
<dbReference type="Pfam" id="PF01967">
    <property type="entry name" value="MoaC"/>
    <property type="match status" value="1"/>
</dbReference>
<dbReference type="SUPFAM" id="SSF55040">
    <property type="entry name" value="Molybdenum cofactor biosynthesis protein C, MoaC"/>
    <property type="match status" value="1"/>
</dbReference>
<comment type="function">
    <text evidence="1">Catalyzes the conversion of (8S)-3',8-cyclo-7,8-dihydroguanosine 5'-triphosphate to cyclic pyranopterin monophosphate (cPMP).</text>
</comment>
<comment type="catalytic activity">
    <reaction evidence="1">
        <text>(8S)-3',8-cyclo-7,8-dihydroguanosine 5'-triphosphate = cyclic pyranopterin phosphate + diphosphate</text>
        <dbReference type="Rhea" id="RHEA:49580"/>
        <dbReference type="ChEBI" id="CHEBI:33019"/>
        <dbReference type="ChEBI" id="CHEBI:59648"/>
        <dbReference type="ChEBI" id="CHEBI:131766"/>
        <dbReference type="EC" id="4.6.1.17"/>
    </reaction>
</comment>
<comment type="pathway">
    <text evidence="1">Cofactor biosynthesis; molybdopterin biosynthesis.</text>
</comment>
<comment type="subunit">
    <text evidence="1">Homohexamer; trimer of dimers.</text>
</comment>
<comment type="similarity">
    <text evidence="1">Belongs to the MoaC family.</text>
</comment>
<gene>
    <name evidence="1" type="primary">moaC</name>
    <name type="ordered locus">YPN_2841</name>
    <name type="ORF">YP516_3213</name>
</gene>
<proteinExistence type="inferred from homology"/>
<evidence type="ECO:0000255" key="1">
    <source>
        <dbReference type="HAMAP-Rule" id="MF_01224"/>
    </source>
</evidence>
<feature type="chain" id="PRO_1000054166" description="Cyclic pyranopterin monophosphate synthase">
    <location>
        <begin position="1"/>
        <end position="159"/>
    </location>
</feature>
<feature type="active site" evidence="1">
    <location>
        <position position="128"/>
    </location>
</feature>
<feature type="binding site" evidence="1">
    <location>
        <begin position="75"/>
        <end position="77"/>
    </location>
    <ligand>
        <name>substrate</name>
    </ligand>
</feature>
<feature type="binding site" evidence="1">
    <location>
        <begin position="113"/>
        <end position="114"/>
    </location>
    <ligand>
        <name>substrate</name>
    </ligand>
</feature>
<organism>
    <name type="scientific">Yersinia pestis bv. Antiqua (strain Nepal516)</name>
    <dbReference type="NCBI Taxonomy" id="377628"/>
    <lineage>
        <taxon>Bacteria</taxon>
        <taxon>Pseudomonadati</taxon>
        <taxon>Pseudomonadota</taxon>
        <taxon>Gammaproteobacteria</taxon>
        <taxon>Enterobacterales</taxon>
        <taxon>Yersiniaceae</taxon>
        <taxon>Yersinia</taxon>
    </lineage>
</organism>
<reference key="1">
    <citation type="journal article" date="2006" name="J. Bacteriol.">
        <title>Complete genome sequence of Yersinia pestis strains Antiqua and Nepal516: evidence of gene reduction in an emerging pathogen.</title>
        <authorList>
            <person name="Chain P.S.G."/>
            <person name="Hu P."/>
            <person name="Malfatti S.A."/>
            <person name="Radnedge L."/>
            <person name="Larimer F."/>
            <person name="Vergez L.M."/>
            <person name="Worsham P."/>
            <person name="Chu M.C."/>
            <person name="Andersen G.L."/>
        </authorList>
    </citation>
    <scope>NUCLEOTIDE SEQUENCE [LARGE SCALE GENOMIC DNA]</scope>
    <source>
        <strain>Nepal516</strain>
    </source>
</reference>
<reference key="2">
    <citation type="submission" date="2009-04" db="EMBL/GenBank/DDBJ databases">
        <title>Yersinia pestis Nepal516A whole genome shotgun sequencing project.</title>
        <authorList>
            <person name="Plunkett G. III"/>
            <person name="Anderson B.D."/>
            <person name="Baumler D.J."/>
            <person name="Burland V."/>
            <person name="Cabot E.L."/>
            <person name="Glasner J.D."/>
            <person name="Mau B."/>
            <person name="Neeno-Eckwall E."/>
            <person name="Perna N.T."/>
            <person name="Munk A.C."/>
            <person name="Tapia R."/>
            <person name="Green L.D."/>
            <person name="Rogers Y.C."/>
            <person name="Detter J.C."/>
            <person name="Bruce D.C."/>
            <person name="Brettin T.S."/>
        </authorList>
    </citation>
    <scope>NUCLEOTIDE SEQUENCE [LARGE SCALE GENOMIC DNA]</scope>
    <source>
        <strain>Nepal516</strain>
    </source>
</reference>
<keyword id="KW-0456">Lyase</keyword>
<keyword id="KW-0501">Molybdenum cofactor biosynthesis</keyword>
<protein>
    <recommendedName>
        <fullName evidence="1">Cyclic pyranopterin monophosphate synthase</fullName>
        <ecNumber evidence="1">4.6.1.17</ecNumber>
    </recommendedName>
    <alternativeName>
        <fullName evidence="1">Molybdenum cofactor biosynthesis protein C</fullName>
    </alternativeName>
</protein>
<accession>Q1CFR2</accession>
<accession>C4GWL1</accession>
<sequence length="159" mass="17225">MTQLTHINTAGEAHMVDVSAKNETVREARAEAFVDMQAATLAMIIDGSHHKGDVFATARIAGIQAAKKTWELIPLCHPLLLTKVEVKLEAQPEHNRVRIETCCRLTGKTGVEMEALTAASVAALTIYDMCKAVQKDMIIGPVRLLTKSGGKSGDFKVDI</sequence>